<name>HRCA_PROA2</name>
<organism>
    <name type="scientific">Prosthecochloris aestuarii (strain DSM 271 / SK 413)</name>
    <dbReference type="NCBI Taxonomy" id="290512"/>
    <lineage>
        <taxon>Bacteria</taxon>
        <taxon>Pseudomonadati</taxon>
        <taxon>Chlorobiota</taxon>
        <taxon>Chlorobiia</taxon>
        <taxon>Chlorobiales</taxon>
        <taxon>Chlorobiaceae</taxon>
        <taxon>Prosthecochloris</taxon>
    </lineage>
</organism>
<keyword id="KW-0678">Repressor</keyword>
<keyword id="KW-0346">Stress response</keyword>
<keyword id="KW-0804">Transcription</keyword>
<keyword id="KW-0805">Transcription regulation</keyword>
<feature type="chain" id="PRO_1000092826" description="Heat-inducible transcription repressor HrcA">
    <location>
        <begin position="1"/>
        <end position="355"/>
    </location>
</feature>
<evidence type="ECO:0000255" key="1">
    <source>
        <dbReference type="HAMAP-Rule" id="MF_00081"/>
    </source>
</evidence>
<proteinExistence type="inferred from homology"/>
<comment type="function">
    <text evidence="1">Negative regulator of class I heat shock genes (grpE-dnaK-dnaJ and groELS operons). Prevents heat-shock induction of these operons.</text>
</comment>
<comment type="similarity">
    <text evidence="1">Belongs to the HrcA family.</text>
</comment>
<sequence>MKTIDLTPREREVLGIIIQAYVVSASPVSSRFIAKNYNLGLSDATIRNVMADLEDAGFISQPHTSAGRVPTDKGYRYYVDLIMMVQGIDDDEKRHIDSNLRLFTIDRKDSSEVLFAAAKVLGSISQQLSVVMSPRLSLGVFERLDMVLLSSSRIMVILSIQSLFVKTIVMELDLDVSRRQIEMVVDLLNQRLSGLTLDEIRTSIAERLADCDTDQGLLNRIVRSADELFDESPVLDRLYIAGAEYIVSQPEFDQPQKVRDLICMIEDKTRIARIVDLDGVVVPQVMTERDVSITIGRENPASTEGDFTVVTTPYFVGNTMGRLAVLGPKRMDYARVVRVVNYMADRLSTTFSDVN</sequence>
<protein>
    <recommendedName>
        <fullName evidence="1">Heat-inducible transcription repressor HrcA</fullName>
    </recommendedName>
</protein>
<gene>
    <name evidence="1" type="primary">hrcA</name>
    <name type="ordered locus">Paes_1584</name>
</gene>
<reference key="1">
    <citation type="submission" date="2008-06" db="EMBL/GenBank/DDBJ databases">
        <title>Complete sequence of chromosome of Prosthecochloris aestuarii DSM 271.</title>
        <authorList>
            <consortium name="US DOE Joint Genome Institute"/>
            <person name="Lucas S."/>
            <person name="Copeland A."/>
            <person name="Lapidus A."/>
            <person name="Glavina del Rio T."/>
            <person name="Dalin E."/>
            <person name="Tice H."/>
            <person name="Bruce D."/>
            <person name="Goodwin L."/>
            <person name="Pitluck S."/>
            <person name="Schmutz J."/>
            <person name="Larimer F."/>
            <person name="Land M."/>
            <person name="Hauser L."/>
            <person name="Kyrpides N."/>
            <person name="Anderson I."/>
            <person name="Liu Z."/>
            <person name="Li T."/>
            <person name="Zhao F."/>
            <person name="Overmann J."/>
            <person name="Bryant D.A."/>
            <person name="Richardson P."/>
        </authorList>
    </citation>
    <scope>NUCLEOTIDE SEQUENCE [LARGE SCALE GENOMIC DNA]</scope>
    <source>
        <strain>DSM 271 / SK 413</strain>
    </source>
</reference>
<accession>B4S9D2</accession>
<dbReference type="EMBL" id="CP001108">
    <property type="protein sequence ID" value="ACF46602.1"/>
    <property type="molecule type" value="Genomic_DNA"/>
</dbReference>
<dbReference type="RefSeq" id="WP_012506135.1">
    <property type="nucleotide sequence ID" value="NC_011059.1"/>
</dbReference>
<dbReference type="SMR" id="B4S9D2"/>
<dbReference type="STRING" id="290512.Paes_1584"/>
<dbReference type="KEGG" id="paa:Paes_1584"/>
<dbReference type="eggNOG" id="COG1420">
    <property type="taxonomic scope" value="Bacteria"/>
</dbReference>
<dbReference type="HOGENOM" id="CLU_050019_1_0_10"/>
<dbReference type="Proteomes" id="UP000002725">
    <property type="component" value="Chromosome"/>
</dbReference>
<dbReference type="GO" id="GO:0003677">
    <property type="term" value="F:DNA binding"/>
    <property type="evidence" value="ECO:0007669"/>
    <property type="project" value="InterPro"/>
</dbReference>
<dbReference type="GO" id="GO:0045892">
    <property type="term" value="P:negative regulation of DNA-templated transcription"/>
    <property type="evidence" value="ECO:0007669"/>
    <property type="project" value="UniProtKB-UniRule"/>
</dbReference>
<dbReference type="Gene3D" id="3.30.450.40">
    <property type="match status" value="1"/>
</dbReference>
<dbReference type="Gene3D" id="3.30.390.60">
    <property type="entry name" value="Heat-inducible transcription repressor hrca homolog, domain 3"/>
    <property type="match status" value="1"/>
</dbReference>
<dbReference type="Gene3D" id="1.10.10.10">
    <property type="entry name" value="Winged helix-like DNA-binding domain superfamily/Winged helix DNA-binding domain"/>
    <property type="match status" value="1"/>
</dbReference>
<dbReference type="HAMAP" id="MF_00081">
    <property type="entry name" value="HrcA"/>
    <property type="match status" value="1"/>
</dbReference>
<dbReference type="InterPro" id="IPR029016">
    <property type="entry name" value="GAF-like_dom_sf"/>
</dbReference>
<dbReference type="InterPro" id="IPR002571">
    <property type="entry name" value="HrcA"/>
</dbReference>
<dbReference type="InterPro" id="IPR021153">
    <property type="entry name" value="HrcA_C"/>
</dbReference>
<dbReference type="InterPro" id="IPR036388">
    <property type="entry name" value="WH-like_DNA-bd_sf"/>
</dbReference>
<dbReference type="InterPro" id="IPR036390">
    <property type="entry name" value="WH_DNA-bd_sf"/>
</dbReference>
<dbReference type="InterPro" id="IPR005104">
    <property type="entry name" value="WHTH_HrcA_DNA-bd"/>
</dbReference>
<dbReference type="InterPro" id="IPR023120">
    <property type="entry name" value="WHTH_transcript_rep_HrcA_IDD"/>
</dbReference>
<dbReference type="NCBIfam" id="TIGR00331">
    <property type="entry name" value="hrcA"/>
    <property type="match status" value="1"/>
</dbReference>
<dbReference type="PANTHER" id="PTHR34824">
    <property type="entry name" value="HEAT-INDUCIBLE TRANSCRIPTION REPRESSOR HRCA"/>
    <property type="match status" value="1"/>
</dbReference>
<dbReference type="PANTHER" id="PTHR34824:SF1">
    <property type="entry name" value="HEAT-INDUCIBLE TRANSCRIPTION REPRESSOR HRCA"/>
    <property type="match status" value="1"/>
</dbReference>
<dbReference type="Pfam" id="PF01628">
    <property type="entry name" value="HrcA"/>
    <property type="match status" value="1"/>
</dbReference>
<dbReference type="Pfam" id="PF03444">
    <property type="entry name" value="HrcA_DNA-bdg"/>
    <property type="match status" value="1"/>
</dbReference>
<dbReference type="PIRSF" id="PIRSF005485">
    <property type="entry name" value="HrcA"/>
    <property type="match status" value="1"/>
</dbReference>
<dbReference type="SUPFAM" id="SSF55781">
    <property type="entry name" value="GAF domain-like"/>
    <property type="match status" value="1"/>
</dbReference>
<dbReference type="SUPFAM" id="SSF46785">
    <property type="entry name" value="Winged helix' DNA-binding domain"/>
    <property type="match status" value="1"/>
</dbReference>